<name>ENGB_COLP3</name>
<organism>
    <name type="scientific">Colwellia psychrerythraea (strain 34H / ATCC BAA-681)</name>
    <name type="common">Vibrio psychroerythus</name>
    <dbReference type="NCBI Taxonomy" id="167879"/>
    <lineage>
        <taxon>Bacteria</taxon>
        <taxon>Pseudomonadati</taxon>
        <taxon>Pseudomonadota</taxon>
        <taxon>Gammaproteobacteria</taxon>
        <taxon>Alteromonadales</taxon>
        <taxon>Colwelliaceae</taxon>
        <taxon>Colwellia</taxon>
    </lineage>
</organism>
<comment type="function">
    <text evidence="1">Necessary for normal cell division and for the maintenance of normal septation.</text>
</comment>
<comment type="cofactor">
    <cofactor evidence="1">
        <name>Mg(2+)</name>
        <dbReference type="ChEBI" id="CHEBI:18420"/>
    </cofactor>
</comment>
<comment type="similarity">
    <text evidence="1">Belongs to the TRAFAC class TrmE-Era-EngA-EngB-Septin-like GTPase superfamily. EngB GTPase family.</text>
</comment>
<proteinExistence type="inferred from homology"/>
<accession>Q48A63</accession>
<evidence type="ECO:0000255" key="1">
    <source>
        <dbReference type="HAMAP-Rule" id="MF_00321"/>
    </source>
</evidence>
<evidence type="ECO:0000256" key="2">
    <source>
        <dbReference type="SAM" id="MobiDB-lite"/>
    </source>
</evidence>
<dbReference type="EMBL" id="CP000083">
    <property type="protein sequence ID" value="AAZ24219.1"/>
    <property type="molecule type" value="Genomic_DNA"/>
</dbReference>
<dbReference type="SMR" id="Q48A63"/>
<dbReference type="STRING" id="167879.CPS_0284"/>
<dbReference type="KEGG" id="cps:CPS_0284"/>
<dbReference type="eggNOG" id="COG0218">
    <property type="taxonomic scope" value="Bacteria"/>
</dbReference>
<dbReference type="HOGENOM" id="CLU_033732_1_0_6"/>
<dbReference type="Proteomes" id="UP000000547">
    <property type="component" value="Chromosome"/>
</dbReference>
<dbReference type="GO" id="GO:0005829">
    <property type="term" value="C:cytosol"/>
    <property type="evidence" value="ECO:0007669"/>
    <property type="project" value="TreeGrafter"/>
</dbReference>
<dbReference type="GO" id="GO:0005525">
    <property type="term" value="F:GTP binding"/>
    <property type="evidence" value="ECO:0007669"/>
    <property type="project" value="UniProtKB-UniRule"/>
</dbReference>
<dbReference type="GO" id="GO:0046872">
    <property type="term" value="F:metal ion binding"/>
    <property type="evidence" value="ECO:0007669"/>
    <property type="project" value="UniProtKB-KW"/>
</dbReference>
<dbReference type="GO" id="GO:0000917">
    <property type="term" value="P:division septum assembly"/>
    <property type="evidence" value="ECO:0007669"/>
    <property type="project" value="UniProtKB-KW"/>
</dbReference>
<dbReference type="CDD" id="cd01876">
    <property type="entry name" value="YihA_EngB"/>
    <property type="match status" value="1"/>
</dbReference>
<dbReference type="FunFam" id="3.40.50.300:FF:000098">
    <property type="entry name" value="Probable GTP-binding protein EngB"/>
    <property type="match status" value="1"/>
</dbReference>
<dbReference type="Gene3D" id="3.40.50.300">
    <property type="entry name" value="P-loop containing nucleotide triphosphate hydrolases"/>
    <property type="match status" value="1"/>
</dbReference>
<dbReference type="HAMAP" id="MF_00321">
    <property type="entry name" value="GTPase_EngB"/>
    <property type="match status" value="1"/>
</dbReference>
<dbReference type="InterPro" id="IPR030393">
    <property type="entry name" value="G_ENGB_dom"/>
</dbReference>
<dbReference type="InterPro" id="IPR006073">
    <property type="entry name" value="GTP-bd"/>
</dbReference>
<dbReference type="InterPro" id="IPR019987">
    <property type="entry name" value="GTP-bd_ribosome_bio_YsxC"/>
</dbReference>
<dbReference type="InterPro" id="IPR027417">
    <property type="entry name" value="P-loop_NTPase"/>
</dbReference>
<dbReference type="NCBIfam" id="TIGR03598">
    <property type="entry name" value="GTPase_YsxC"/>
    <property type="match status" value="1"/>
</dbReference>
<dbReference type="PANTHER" id="PTHR11649:SF13">
    <property type="entry name" value="ENGB-TYPE G DOMAIN-CONTAINING PROTEIN"/>
    <property type="match status" value="1"/>
</dbReference>
<dbReference type="PANTHER" id="PTHR11649">
    <property type="entry name" value="MSS1/TRME-RELATED GTP-BINDING PROTEIN"/>
    <property type="match status" value="1"/>
</dbReference>
<dbReference type="Pfam" id="PF01926">
    <property type="entry name" value="MMR_HSR1"/>
    <property type="match status" value="1"/>
</dbReference>
<dbReference type="SUPFAM" id="SSF52540">
    <property type="entry name" value="P-loop containing nucleoside triphosphate hydrolases"/>
    <property type="match status" value="1"/>
</dbReference>
<dbReference type="PROSITE" id="PS51706">
    <property type="entry name" value="G_ENGB"/>
    <property type="match status" value="1"/>
</dbReference>
<sequence length="224" mass="24943">MSSTKIHLTKAAFTISAPDIRRLPADSGIEVAFAGRSNAGKSSALNTLTNQRGLARISKTPGRTQLINVFEVAENRRLIDLPGYGFAQVPLAMKKKWQKALGEYLEKRQCLKGLVVLMDIRHPLKDLDMDLIQWAADSDLPVLALLTKCDKLSQGKRSSEVLAVKKALSSLNADIQVQAFSSLKYTGKEQADAIICQWLEQEAQEYELPEEDDFDDSDEFTEEE</sequence>
<gene>
    <name evidence="1" type="primary">engB</name>
    <name type="ordered locus">CPS_0284</name>
</gene>
<protein>
    <recommendedName>
        <fullName evidence="1">Probable GTP-binding protein EngB</fullName>
    </recommendedName>
</protein>
<feature type="chain" id="PRO_0000266846" description="Probable GTP-binding protein EngB">
    <location>
        <begin position="1"/>
        <end position="224"/>
    </location>
</feature>
<feature type="domain" description="EngB-type G" evidence="1">
    <location>
        <begin position="27"/>
        <end position="201"/>
    </location>
</feature>
<feature type="region of interest" description="Disordered" evidence="2">
    <location>
        <begin position="205"/>
        <end position="224"/>
    </location>
</feature>
<feature type="binding site" evidence="1">
    <location>
        <begin position="35"/>
        <end position="42"/>
    </location>
    <ligand>
        <name>GTP</name>
        <dbReference type="ChEBI" id="CHEBI:37565"/>
    </ligand>
</feature>
<feature type="binding site" evidence="1">
    <location>
        <position position="42"/>
    </location>
    <ligand>
        <name>Mg(2+)</name>
        <dbReference type="ChEBI" id="CHEBI:18420"/>
    </ligand>
</feature>
<feature type="binding site" evidence="1">
    <location>
        <begin position="62"/>
        <end position="66"/>
    </location>
    <ligand>
        <name>GTP</name>
        <dbReference type="ChEBI" id="CHEBI:37565"/>
    </ligand>
</feature>
<feature type="binding site" evidence="1">
    <location>
        <position position="64"/>
    </location>
    <ligand>
        <name>Mg(2+)</name>
        <dbReference type="ChEBI" id="CHEBI:18420"/>
    </ligand>
</feature>
<feature type="binding site" evidence="1">
    <location>
        <begin position="80"/>
        <end position="83"/>
    </location>
    <ligand>
        <name>GTP</name>
        <dbReference type="ChEBI" id="CHEBI:37565"/>
    </ligand>
</feature>
<feature type="binding site" evidence="1">
    <location>
        <begin position="147"/>
        <end position="150"/>
    </location>
    <ligand>
        <name>GTP</name>
        <dbReference type="ChEBI" id="CHEBI:37565"/>
    </ligand>
</feature>
<feature type="binding site" evidence="1">
    <location>
        <begin position="180"/>
        <end position="182"/>
    </location>
    <ligand>
        <name>GTP</name>
        <dbReference type="ChEBI" id="CHEBI:37565"/>
    </ligand>
</feature>
<keyword id="KW-0131">Cell cycle</keyword>
<keyword id="KW-0132">Cell division</keyword>
<keyword id="KW-0342">GTP-binding</keyword>
<keyword id="KW-0460">Magnesium</keyword>
<keyword id="KW-0479">Metal-binding</keyword>
<keyword id="KW-0547">Nucleotide-binding</keyword>
<keyword id="KW-0717">Septation</keyword>
<reference key="1">
    <citation type="journal article" date="2005" name="Proc. Natl. Acad. Sci. U.S.A.">
        <title>The psychrophilic lifestyle as revealed by the genome sequence of Colwellia psychrerythraea 34H through genomic and proteomic analyses.</title>
        <authorList>
            <person name="Methe B.A."/>
            <person name="Nelson K.E."/>
            <person name="Deming J.W."/>
            <person name="Momen B."/>
            <person name="Melamud E."/>
            <person name="Zhang X."/>
            <person name="Moult J."/>
            <person name="Madupu R."/>
            <person name="Nelson W.C."/>
            <person name="Dodson R.J."/>
            <person name="Brinkac L.M."/>
            <person name="Daugherty S.C."/>
            <person name="Durkin A.S."/>
            <person name="DeBoy R.T."/>
            <person name="Kolonay J.F."/>
            <person name="Sullivan S.A."/>
            <person name="Zhou L."/>
            <person name="Davidsen T.M."/>
            <person name="Wu M."/>
            <person name="Huston A.L."/>
            <person name="Lewis M."/>
            <person name="Weaver B."/>
            <person name="Weidman J.F."/>
            <person name="Khouri H."/>
            <person name="Utterback T.R."/>
            <person name="Feldblyum T.V."/>
            <person name="Fraser C.M."/>
        </authorList>
    </citation>
    <scope>NUCLEOTIDE SEQUENCE [LARGE SCALE GENOMIC DNA]</scope>
    <source>
        <strain>34H / ATCC BAA-681</strain>
    </source>
</reference>